<name>GP107_HUMAN</name>
<comment type="function">
    <text evidence="1 4">Has been proposed to act as a receptor for neuronostatin, a peptide derived from the somatostatin/SST precursor (PubMed:22933024). Involved in blood sugar regulation through the induction of glucagon in response to low glucose (By similarity).</text>
</comment>
<comment type="function">
    <text evidence="5">(Microbial infection) Required for intoxication by Pseudomonas aeruginosa exotoxin A and Campylobacter jejuni CDT. May contribute to the retrograde transport of bacterial toxins, including cholera toxin, from the trans-Golgi network to the endoplasmic reticulum.</text>
</comment>
<comment type="subcellular location">
    <subcellularLocation>
        <location evidence="1">Cell membrane</location>
        <topology evidence="10">Multi-pass membrane protein</topology>
    </subcellularLocation>
    <subcellularLocation>
        <location evidence="5">Golgi apparatus</location>
        <location evidence="5">trans-Golgi network membrane</location>
    </subcellularLocation>
</comment>
<comment type="alternative products">
    <event type="alternative splicing"/>
    <isoform>
        <id>Q5VW38-1</id>
        <name>1</name>
        <sequence type="displayed"/>
    </isoform>
    <isoform>
        <id>Q5VW38-2</id>
        <name>2</name>
        <sequence type="described" ref="VSP_014436"/>
    </isoform>
    <isoform>
        <id>Q5VW38-3</id>
        <name>3</name>
        <sequence type="described" ref="VSP_014434 VSP_014435"/>
    </isoform>
</comment>
<comment type="PTM">
    <text evidence="5">Cleaved by FURIN to yield two fragments of 17 and 35 kDa that remain associated via a disulfide bond.</text>
</comment>
<comment type="similarity">
    <text evidence="10">Belongs to the LU7TM family.</text>
</comment>
<proteinExistence type="evidence at protein level"/>
<feature type="signal peptide" evidence="2">
    <location>
        <begin position="1"/>
        <end position="39"/>
    </location>
</feature>
<feature type="chain" id="PRO_0000021340" description="Protein GPR107">
    <location>
        <begin position="40"/>
        <end position="600"/>
    </location>
</feature>
<feature type="topological domain" description="Extracellular" evidence="2">
    <location>
        <begin position="40"/>
        <end position="263"/>
    </location>
</feature>
<feature type="transmembrane region" description="Helical; Name=1" evidence="2">
    <location>
        <begin position="264"/>
        <end position="284"/>
    </location>
</feature>
<feature type="topological domain" description="Cytoplasmic" evidence="2">
    <location>
        <begin position="285"/>
        <end position="293"/>
    </location>
</feature>
<feature type="transmembrane region" description="Helical; Name=2" evidence="2">
    <location>
        <begin position="294"/>
        <end position="314"/>
    </location>
</feature>
<feature type="topological domain" description="Extracellular" evidence="2">
    <location>
        <begin position="315"/>
        <end position="337"/>
    </location>
</feature>
<feature type="transmembrane region" description="Helical; Name=3" evidence="2">
    <location>
        <begin position="338"/>
        <end position="358"/>
    </location>
</feature>
<feature type="topological domain" description="Cytoplasmic" evidence="2">
    <location>
        <begin position="359"/>
        <end position="368"/>
    </location>
</feature>
<feature type="transmembrane region" description="Helical; Name=4" evidence="2">
    <location>
        <begin position="369"/>
        <end position="389"/>
    </location>
</feature>
<feature type="topological domain" description="Extracellular" evidence="2">
    <location>
        <begin position="390"/>
        <end position="402"/>
    </location>
</feature>
<feature type="transmembrane region" description="Helical; Name=5" evidence="2">
    <location>
        <begin position="403"/>
        <end position="423"/>
    </location>
</feature>
<feature type="topological domain" description="Cytoplasmic" evidence="2">
    <location>
        <begin position="424"/>
        <end position="498"/>
    </location>
</feature>
<feature type="transmembrane region" description="Helical; Name=6" evidence="2">
    <location>
        <begin position="499"/>
        <end position="519"/>
    </location>
</feature>
<feature type="topological domain" description="Extracellular" evidence="2">
    <location>
        <begin position="520"/>
        <end position="524"/>
    </location>
</feature>
<feature type="transmembrane region" description="Helical; Name=7" evidence="2">
    <location>
        <begin position="525"/>
        <end position="544"/>
    </location>
</feature>
<feature type="topological domain" description="Cytoplasmic" evidence="2">
    <location>
        <begin position="545"/>
        <end position="600"/>
    </location>
</feature>
<feature type="region of interest" description="Disordered" evidence="3">
    <location>
        <begin position="157"/>
        <end position="185"/>
    </location>
</feature>
<feature type="compositionally biased region" description="Polar residues" evidence="3">
    <location>
        <begin position="157"/>
        <end position="175"/>
    </location>
</feature>
<feature type="compositionally biased region" description="Basic and acidic residues" evidence="3">
    <location>
        <begin position="176"/>
        <end position="185"/>
    </location>
</feature>
<feature type="glycosylation site" description="N-linked (GlcNAc...) asparagine" evidence="2">
    <location>
        <position position="70"/>
    </location>
</feature>
<feature type="glycosylation site" description="N-linked (GlcNAc...) asparagine" evidence="2">
    <location>
        <position position="169"/>
    </location>
</feature>
<feature type="glycosylation site" description="N-linked (GlcNAc...) asparagine" evidence="2">
    <location>
        <position position="211"/>
    </location>
</feature>
<feature type="disulfide bond" evidence="5">
    <location>
        <begin position="109"/>
        <end position="228"/>
    </location>
</feature>
<feature type="splice variant" id="VSP_014434" description="In isoform 3." evidence="6">
    <original>MAA</original>
    <variation>GFH</variation>
    <location>
        <begin position="298"/>
        <end position="300"/>
    </location>
</feature>
<feature type="splice variant" id="VSP_014435" description="In isoform 3." evidence="6">
    <location>
        <begin position="301"/>
        <end position="600"/>
    </location>
</feature>
<feature type="splice variant" id="VSP_014436" description="In isoform 2." evidence="7 8 9">
    <location>
        <begin position="436"/>
        <end position="483"/>
    </location>
</feature>
<feature type="sequence variant" id="VAR_030863" description="In dbSNP:rs640343.">
    <original>A</original>
    <variation>P</variation>
    <location>
        <position position="189"/>
    </location>
</feature>
<feature type="mutagenesis site" description="Loss of furin cleavage." evidence="5">
    <original>R</original>
    <variation>A</variation>
    <location>
        <position position="182"/>
    </location>
</feature>
<feature type="sequence conflict" description="In Ref. 2; BAB15408." evidence="10" ref="2">
    <original>N</original>
    <variation>D</variation>
    <location>
        <position position="250"/>
    </location>
</feature>
<feature type="sequence conflict" description="In Ref. 6; BAB13450." evidence="10" ref="6">
    <original>H</original>
    <variation>R</variation>
    <location>
        <position position="457"/>
    </location>
</feature>
<feature type="sequence conflict" description="In Ref. 6; BAB13450." evidence="10" ref="6">
    <original>Q</original>
    <variation>R</variation>
    <location>
        <position position="461"/>
    </location>
</feature>
<protein>
    <recommendedName>
        <fullName>Protein GPR107</fullName>
    </recommendedName>
    <alternativeName>
        <fullName>Lung seven transmembrane receptor 1</fullName>
    </alternativeName>
</protein>
<organism>
    <name type="scientific">Homo sapiens</name>
    <name type="common">Human</name>
    <dbReference type="NCBI Taxonomy" id="9606"/>
    <lineage>
        <taxon>Eukaryota</taxon>
        <taxon>Metazoa</taxon>
        <taxon>Chordata</taxon>
        <taxon>Craniata</taxon>
        <taxon>Vertebrata</taxon>
        <taxon>Euteleostomi</taxon>
        <taxon>Mammalia</taxon>
        <taxon>Eutheria</taxon>
        <taxon>Euarchontoglires</taxon>
        <taxon>Primates</taxon>
        <taxon>Haplorrhini</taxon>
        <taxon>Catarrhini</taxon>
        <taxon>Hominidae</taxon>
        <taxon>Homo</taxon>
    </lineage>
</organism>
<reference key="1">
    <citation type="journal article" date="2002" name="J. Anat.">
        <title>Novel putative G protein-coupled receptors cloned from lung.</title>
        <authorList>
            <person name="Edgar A.J."/>
            <person name="Polak J.M."/>
        </authorList>
    </citation>
    <scope>NUCLEOTIDE SEQUENCE [MRNA] (ISOFORM 2)</scope>
</reference>
<reference key="2">
    <citation type="journal article" date="2004" name="Nat. Genet.">
        <title>Complete sequencing and characterization of 21,243 full-length human cDNAs.</title>
        <authorList>
            <person name="Ota T."/>
            <person name="Suzuki Y."/>
            <person name="Nishikawa T."/>
            <person name="Otsuki T."/>
            <person name="Sugiyama T."/>
            <person name="Irie R."/>
            <person name="Wakamatsu A."/>
            <person name="Hayashi K."/>
            <person name="Sato H."/>
            <person name="Nagai K."/>
            <person name="Kimura K."/>
            <person name="Makita H."/>
            <person name="Sekine M."/>
            <person name="Obayashi M."/>
            <person name="Nishi T."/>
            <person name="Shibahara T."/>
            <person name="Tanaka T."/>
            <person name="Ishii S."/>
            <person name="Yamamoto J."/>
            <person name="Saito K."/>
            <person name="Kawai Y."/>
            <person name="Isono Y."/>
            <person name="Nakamura Y."/>
            <person name="Nagahari K."/>
            <person name="Murakami K."/>
            <person name="Yasuda T."/>
            <person name="Iwayanagi T."/>
            <person name="Wagatsuma M."/>
            <person name="Shiratori A."/>
            <person name="Sudo H."/>
            <person name="Hosoiri T."/>
            <person name="Kaku Y."/>
            <person name="Kodaira H."/>
            <person name="Kondo H."/>
            <person name="Sugawara M."/>
            <person name="Takahashi M."/>
            <person name="Kanda K."/>
            <person name="Yokoi T."/>
            <person name="Furuya T."/>
            <person name="Kikkawa E."/>
            <person name="Omura Y."/>
            <person name="Abe K."/>
            <person name="Kamihara K."/>
            <person name="Katsuta N."/>
            <person name="Sato K."/>
            <person name="Tanikawa M."/>
            <person name="Yamazaki M."/>
            <person name="Ninomiya K."/>
            <person name="Ishibashi T."/>
            <person name="Yamashita H."/>
            <person name="Murakawa K."/>
            <person name="Fujimori K."/>
            <person name="Tanai H."/>
            <person name="Kimata M."/>
            <person name="Watanabe M."/>
            <person name="Hiraoka S."/>
            <person name="Chiba Y."/>
            <person name="Ishida S."/>
            <person name="Ono Y."/>
            <person name="Takiguchi S."/>
            <person name="Watanabe S."/>
            <person name="Yosida M."/>
            <person name="Hotuta T."/>
            <person name="Kusano J."/>
            <person name="Kanehori K."/>
            <person name="Takahashi-Fujii A."/>
            <person name="Hara H."/>
            <person name="Tanase T.-O."/>
            <person name="Nomura Y."/>
            <person name="Togiya S."/>
            <person name="Komai F."/>
            <person name="Hara R."/>
            <person name="Takeuchi K."/>
            <person name="Arita M."/>
            <person name="Imose N."/>
            <person name="Musashino K."/>
            <person name="Yuuki H."/>
            <person name="Oshima A."/>
            <person name="Sasaki N."/>
            <person name="Aotsuka S."/>
            <person name="Yoshikawa Y."/>
            <person name="Matsunawa H."/>
            <person name="Ichihara T."/>
            <person name="Shiohata N."/>
            <person name="Sano S."/>
            <person name="Moriya S."/>
            <person name="Momiyama H."/>
            <person name="Satoh N."/>
            <person name="Takami S."/>
            <person name="Terashima Y."/>
            <person name="Suzuki O."/>
            <person name="Nakagawa S."/>
            <person name="Senoh A."/>
            <person name="Mizoguchi H."/>
            <person name="Goto Y."/>
            <person name="Shimizu F."/>
            <person name="Wakebe H."/>
            <person name="Hishigaki H."/>
            <person name="Watanabe T."/>
            <person name="Sugiyama A."/>
            <person name="Takemoto M."/>
            <person name="Kawakami B."/>
            <person name="Yamazaki M."/>
            <person name="Watanabe K."/>
            <person name="Kumagai A."/>
            <person name="Itakura S."/>
            <person name="Fukuzumi Y."/>
            <person name="Fujimori Y."/>
            <person name="Komiyama M."/>
            <person name="Tashiro H."/>
            <person name="Tanigami A."/>
            <person name="Fujiwara T."/>
            <person name="Ono T."/>
            <person name="Yamada K."/>
            <person name="Fujii Y."/>
            <person name="Ozaki K."/>
            <person name="Hirao M."/>
            <person name="Ohmori Y."/>
            <person name="Kawabata A."/>
            <person name="Hikiji T."/>
            <person name="Kobatake N."/>
            <person name="Inagaki H."/>
            <person name="Ikema Y."/>
            <person name="Okamoto S."/>
            <person name="Okitani R."/>
            <person name="Kawakami T."/>
            <person name="Noguchi S."/>
            <person name="Itoh T."/>
            <person name="Shigeta K."/>
            <person name="Senba T."/>
            <person name="Matsumura K."/>
            <person name="Nakajima Y."/>
            <person name="Mizuno T."/>
            <person name="Morinaga M."/>
            <person name="Sasaki M."/>
            <person name="Togashi T."/>
            <person name="Oyama M."/>
            <person name="Hata H."/>
            <person name="Watanabe M."/>
            <person name="Komatsu T."/>
            <person name="Mizushima-Sugano J."/>
            <person name="Satoh T."/>
            <person name="Shirai Y."/>
            <person name="Takahashi Y."/>
            <person name="Nakagawa K."/>
            <person name="Okumura K."/>
            <person name="Nagase T."/>
            <person name="Nomura N."/>
            <person name="Kikuchi H."/>
            <person name="Masuho Y."/>
            <person name="Yamashita R."/>
            <person name="Nakai K."/>
            <person name="Yada T."/>
            <person name="Nakamura Y."/>
            <person name="Ohara O."/>
            <person name="Isogai T."/>
            <person name="Sugano S."/>
        </authorList>
    </citation>
    <scope>NUCLEOTIDE SEQUENCE [LARGE SCALE MRNA] (ISOFORM 3)</scope>
    <source>
        <tissue>Small intestine</tissue>
    </source>
</reference>
<reference key="3">
    <citation type="journal article" date="2004" name="Nature">
        <title>DNA sequence and analysis of human chromosome 9.</title>
        <authorList>
            <person name="Humphray S.J."/>
            <person name="Oliver K."/>
            <person name="Hunt A.R."/>
            <person name="Plumb R.W."/>
            <person name="Loveland J.E."/>
            <person name="Howe K.L."/>
            <person name="Andrews T.D."/>
            <person name="Searle S."/>
            <person name="Hunt S.E."/>
            <person name="Scott C.E."/>
            <person name="Jones M.C."/>
            <person name="Ainscough R."/>
            <person name="Almeida J.P."/>
            <person name="Ambrose K.D."/>
            <person name="Ashwell R.I.S."/>
            <person name="Babbage A.K."/>
            <person name="Babbage S."/>
            <person name="Bagguley C.L."/>
            <person name="Bailey J."/>
            <person name="Banerjee R."/>
            <person name="Barker D.J."/>
            <person name="Barlow K.F."/>
            <person name="Bates K."/>
            <person name="Beasley H."/>
            <person name="Beasley O."/>
            <person name="Bird C.P."/>
            <person name="Bray-Allen S."/>
            <person name="Brown A.J."/>
            <person name="Brown J.Y."/>
            <person name="Burford D."/>
            <person name="Burrill W."/>
            <person name="Burton J."/>
            <person name="Carder C."/>
            <person name="Carter N.P."/>
            <person name="Chapman J.C."/>
            <person name="Chen Y."/>
            <person name="Clarke G."/>
            <person name="Clark S.Y."/>
            <person name="Clee C.M."/>
            <person name="Clegg S."/>
            <person name="Collier R.E."/>
            <person name="Corby N."/>
            <person name="Crosier M."/>
            <person name="Cummings A.T."/>
            <person name="Davies J."/>
            <person name="Dhami P."/>
            <person name="Dunn M."/>
            <person name="Dutta I."/>
            <person name="Dyer L.W."/>
            <person name="Earthrowl M.E."/>
            <person name="Faulkner L."/>
            <person name="Fleming C.J."/>
            <person name="Frankish A."/>
            <person name="Frankland J.A."/>
            <person name="French L."/>
            <person name="Fricker D.G."/>
            <person name="Garner P."/>
            <person name="Garnett J."/>
            <person name="Ghori J."/>
            <person name="Gilbert J.G.R."/>
            <person name="Glison C."/>
            <person name="Grafham D.V."/>
            <person name="Gribble S."/>
            <person name="Griffiths C."/>
            <person name="Griffiths-Jones S."/>
            <person name="Grocock R."/>
            <person name="Guy J."/>
            <person name="Hall R.E."/>
            <person name="Hammond S."/>
            <person name="Harley J.L."/>
            <person name="Harrison E.S.I."/>
            <person name="Hart E.A."/>
            <person name="Heath P.D."/>
            <person name="Henderson C.D."/>
            <person name="Hopkins B.L."/>
            <person name="Howard P.J."/>
            <person name="Howden P.J."/>
            <person name="Huckle E."/>
            <person name="Johnson C."/>
            <person name="Johnson D."/>
            <person name="Joy A.A."/>
            <person name="Kay M."/>
            <person name="Keenan S."/>
            <person name="Kershaw J.K."/>
            <person name="Kimberley A.M."/>
            <person name="King A."/>
            <person name="Knights A."/>
            <person name="Laird G.K."/>
            <person name="Langford C."/>
            <person name="Lawlor S."/>
            <person name="Leongamornlert D.A."/>
            <person name="Leversha M."/>
            <person name="Lloyd C."/>
            <person name="Lloyd D.M."/>
            <person name="Lovell J."/>
            <person name="Martin S."/>
            <person name="Mashreghi-Mohammadi M."/>
            <person name="Matthews L."/>
            <person name="McLaren S."/>
            <person name="McLay K.E."/>
            <person name="McMurray A."/>
            <person name="Milne S."/>
            <person name="Nickerson T."/>
            <person name="Nisbett J."/>
            <person name="Nordsiek G."/>
            <person name="Pearce A.V."/>
            <person name="Peck A.I."/>
            <person name="Porter K.M."/>
            <person name="Pandian R."/>
            <person name="Pelan S."/>
            <person name="Phillimore B."/>
            <person name="Povey S."/>
            <person name="Ramsey Y."/>
            <person name="Rand V."/>
            <person name="Scharfe M."/>
            <person name="Sehra H.K."/>
            <person name="Shownkeen R."/>
            <person name="Sims S.K."/>
            <person name="Skuce C.D."/>
            <person name="Smith M."/>
            <person name="Steward C.A."/>
            <person name="Swarbreck D."/>
            <person name="Sycamore N."/>
            <person name="Tester J."/>
            <person name="Thorpe A."/>
            <person name="Tracey A."/>
            <person name="Tromans A."/>
            <person name="Thomas D.W."/>
            <person name="Wall M."/>
            <person name="Wallis J.M."/>
            <person name="West A.P."/>
            <person name="Whitehead S.L."/>
            <person name="Willey D.L."/>
            <person name="Williams S.A."/>
            <person name="Wilming L."/>
            <person name="Wray P.W."/>
            <person name="Young L."/>
            <person name="Ashurst J.L."/>
            <person name="Coulson A."/>
            <person name="Blocker H."/>
            <person name="Durbin R.M."/>
            <person name="Sulston J.E."/>
            <person name="Hubbard T."/>
            <person name="Jackson M.J."/>
            <person name="Bentley D.R."/>
            <person name="Beck S."/>
            <person name="Rogers J."/>
            <person name="Dunham I."/>
        </authorList>
    </citation>
    <scope>NUCLEOTIDE SEQUENCE [LARGE SCALE GENOMIC DNA]</scope>
</reference>
<reference key="4">
    <citation type="submission" date="2005-07" db="EMBL/GenBank/DDBJ databases">
        <authorList>
            <person name="Mural R.J."/>
            <person name="Istrail S."/>
            <person name="Sutton G.G."/>
            <person name="Florea L."/>
            <person name="Halpern A.L."/>
            <person name="Mobarry C.M."/>
            <person name="Lippert R."/>
            <person name="Walenz B."/>
            <person name="Shatkay H."/>
            <person name="Dew I."/>
            <person name="Miller J.R."/>
            <person name="Flanigan M.J."/>
            <person name="Edwards N.J."/>
            <person name="Bolanos R."/>
            <person name="Fasulo D."/>
            <person name="Halldorsson B.V."/>
            <person name="Hannenhalli S."/>
            <person name="Turner R."/>
            <person name="Yooseph S."/>
            <person name="Lu F."/>
            <person name="Nusskern D.R."/>
            <person name="Shue B.C."/>
            <person name="Zheng X.H."/>
            <person name="Zhong F."/>
            <person name="Delcher A.L."/>
            <person name="Huson D.H."/>
            <person name="Kravitz S.A."/>
            <person name="Mouchard L."/>
            <person name="Reinert K."/>
            <person name="Remington K.A."/>
            <person name="Clark A.G."/>
            <person name="Waterman M.S."/>
            <person name="Eichler E.E."/>
            <person name="Adams M.D."/>
            <person name="Hunkapiller M.W."/>
            <person name="Myers E.W."/>
            <person name="Venter J.C."/>
        </authorList>
    </citation>
    <scope>NUCLEOTIDE SEQUENCE [LARGE SCALE GENOMIC DNA]</scope>
</reference>
<reference key="5">
    <citation type="journal article" date="2004" name="Genome Res.">
        <title>The status, quality, and expansion of the NIH full-length cDNA project: the Mammalian Gene Collection (MGC).</title>
        <authorList>
            <consortium name="The MGC Project Team"/>
        </authorList>
    </citation>
    <scope>NUCLEOTIDE SEQUENCE [LARGE SCALE MRNA] (ISOFORM 2)</scope>
</reference>
<reference key="6">
    <citation type="journal article" date="2000" name="DNA Res.">
        <title>Prediction of the coding sequences of unidentified human genes. XVIII. The complete sequences of 100 new cDNA clones from brain which code for large proteins in vitro.</title>
        <authorList>
            <person name="Nagase T."/>
            <person name="Kikuno R."/>
            <person name="Nakayama M."/>
            <person name="Hirosawa M."/>
            <person name="Ohara O."/>
        </authorList>
    </citation>
    <scope>NUCLEOTIDE SEQUENCE [LARGE SCALE MRNA] OF 2-600 (ISOFORM 1)</scope>
    <source>
        <tissue>Brain</tissue>
    </source>
</reference>
<reference key="7">
    <citation type="journal article" date="2007" name="BMC Genomics">
        <title>The full-ORF clone resource of the German cDNA consortium.</title>
        <authorList>
            <person name="Bechtel S."/>
            <person name="Rosenfelder H."/>
            <person name="Duda A."/>
            <person name="Schmidt C.P."/>
            <person name="Ernst U."/>
            <person name="Wellenreuther R."/>
            <person name="Mehrle A."/>
            <person name="Schuster C."/>
            <person name="Bahr A."/>
            <person name="Bloecker H."/>
            <person name="Heubner D."/>
            <person name="Hoerlein A."/>
            <person name="Michel G."/>
            <person name="Wedler H."/>
            <person name="Koehrer K."/>
            <person name="Ottenwaelder B."/>
            <person name="Poustka A."/>
            <person name="Wiemann S."/>
            <person name="Schupp I."/>
        </authorList>
    </citation>
    <scope>NUCLEOTIDE SEQUENCE [LARGE SCALE MRNA] OF 44-600 (ISOFORM 2)</scope>
    <source>
        <tissue>Lymph node</tissue>
    </source>
</reference>
<reference key="8">
    <citation type="journal article" date="2011" name="BMC Syst. Biol.">
        <title>Initial characterization of the human central proteome.</title>
        <authorList>
            <person name="Burkard T.R."/>
            <person name="Planyavsky M."/>
            <person name="Kaupe I."/>
            <person name="Breitwieser F.P."/>
            <person name="Buerckstuemmer T."/>
            <person name="Bennett K.L."/>
            <person name="Superti-Furga G."/>
            <person name="Colinge J."/>
        </authorList>
    </citation>
    <scope>IDENTIFICATION BY MASS SPECTROMETRY [LARGE SCALE ANALYSIS]</scope>
</reference>
<reference key="9">
    <citation type="journal article" date="2012" name="Am. J. Physiol.">
        <title>Evidence for an interaction of neuronostatin with the orphan G protein-coupled receptor, GPR107.</title>
        <authorList>
            <person name="Yosten G.L."/>
            <person name="Redlinger L.J."/>
            <person name="Samson W.K."/>
        </authorList>
    </citation>
    <scope>FUNCTION</scope>
</reference>
<reference key="10">
    <citation type="journal article" date="2014" name="J. Biol. Chem.">
        <title>GPR107, a G-protein-coupled receptor essential for intoxication by Pseudomonas aeruginosa exotoxin A, localizes to the Golgi and is cleaved by furin.</title>
        <authorList>
            <person name="Tafesse F.G."/>
            <person name="Guimaraes C.P."/>
            <person name="Maruyama T."/>
            <person name="Carette J.E."/>
            <person name="Lory S."/>
            <person name="Brummelkamp T.R."/>
            <person name="Ploegh H.L."/>
        </authorList>
    </citation>
    <scope>FUNCTION</scope>
    <scope>CLEAVAGE BY FURIN</scope>
    <scope>SUBCELLULAR LOCATION</scope>
    <scope>MUTAGENESIS OF ARG-182</scope>
    <scope>DISULFIDE BOND</scope>
</reference>
<evidence type="ECO:0000250" key="1">
    <source>
        <dbReference type="UniProtKB" id="D3ZWZ9"/>
    </source>
</evidence>
<evidence type="ECO:0000255" key="2"/>
<evidence type="ECO:0000256" key="3">
    <source>
        <dbReference type="SAM" id="MobiDB-lite"/>
    </source>
</evidence>
<evidence type="ECO:0000269" key="4">
    <source>
    </source>
</evidence>
<evidence type="ECO:0000269" key="5">
    <source>
    </source>
</evidence>
<evidence type="ECO:0000303" key="6">
    <source>
    </source>
</evidence>
<evidence type="ECO:0000303" key="7">
    <source>
    </source>
</evidence>
<evidence type="ECO:0000303" key="8">
    <source>
    </source>
</evidence>
<evidence type="ECO:0000303" key="9">
    <source ref="1"/>
</evidence>
<evidence type="ECO:0000305" key="10"/>
<gene>
    <name type="primary">GPR107</name>
    <name type="synonym">KIAA1624</name>
    <name type="synonym">LUSTR1</name>
</gene>
<keyword id="KW-0025">Alternative splicing</keyword>
<keyword id="KW-1003">Cell membrane</keyword>
<keyword id="KW-1015">Disulfide bond</keyword>
<keyword id="KW-0325">Glycoprotein</keyword>
<keyword id="KW-0333">Golgi apparatus</keyword>
<keyword id="KW-0472">Membrane</keyword>
<keyword id="KW-1267">Proteomics identification</keyword>
<keyword id="KW-1185">Reference proteome</keyword>
<keyword id="KW-0732">Signal</keyword>
<keyword id="KW-0812">Transmembrane</keyword>
<keyword id="KW-1133">Transmembrane helix</keyword>
<dbReference type="EMBL" id="AF376725">
    <property type="protein sequence ID" value="AAK57695.1"/>
    <property type="molecule type" value="mRNA"/>
</dbReference>
<dbReference type="EMBL" id="AK026244">
    <property type="protein sequence ID" value="BAB15408.1"/>
    <property type="molecule type" value="mRNA"/>
</dbReference>
<dbReference type="EMBL" id="AL136141">
    <property type="status" value="NOT_ANNOTATED_CDS"/>
    <property type="molecule type" value="Genomic_DNA"/>
</dbReference>
<dbReference type="EMBL" id="AL360004">
    <property type="status" value="NOT_ANNOTATED_CDS"/>
    <property type="molecule type" value="Genomic_DNA"/>
</dbReference>
<dbReference type="EMBL" id="AL392105">
    <property type="status" value="NOT_ANNOTATED_CDS"/>
    <property type="molecule type" value="Genomic_DNA"/>
</dbReference>
<dbReference type="EMBL" id="CH471090">
    <property type="protein sequence ID" value="EAW87924.1"/>
    <property type="molecule type" value="Genomic_DNA"/>
</dbReference>
<dbReference type="EMBL" id="BC110518">
    <property type="protein sequence ID" value="AAI10519.1"/>
    <property type="molecule type" value="mRNA"/>
</dbReference>
<dbReference type="EMBL" id="AB046844">
    <property type="protein sequence ID" value="BAB13450.1"/>
    <property type="molecule type" value="mRNA"/>
</dbReference>
<dbReference type="EMBL" id="AL834359">
    <property type="protein sequence ID" value="CAI46205.1"/>
    <property type="molecule type" value="mRNA"/>
</dbReference>
<dbReference type="CCDS" id="CCDS35162.1">
    <molecule id="Q5VW38-2"/>
</dbReference>
<dbReference type="CCDS" id="CCDS48041.1">
    <molecule id="Q5VW38-1"/>
</dbReference>
<dbReference type="RefSeq" id="NP_001130029.1">
    <molecule id="Q5VW38-1"/>
    <property type="nucleotide sequence ID" value="NM_001136557.2"/>
</dbReference>
<dbReference type="RefSeq" id="NP_001130030.1">
    <property type="nucleotide sequence ID" value="NM_001136558.1"/>
</dbReference>
<dbReference type="RefSeq" id="NP_066011.2">
    <molecule id="Q5VW38-2"/>
    <property type="nucleotide sequence ID" value="NM_020960.5"/>
</dbReference>
<dbReference type="BioGRID" id="121743">
    <property type="interactions" value="84"/>
</dbReference>
<dbReference type="FunCoup" id="Q5VW38">
    <property type="interactions" value="3950"/>
</dbReference>
<dbReference type="IntAct" id="Q5VW38">
    <property type="interactions" value="47"/>
</dbReference>
<dbReference type="MINT" id="Q5VW38"/>
<dbReference type="STRING" id="9606.ENSP00000361483"/>
<dbReference type="ChEMBL" id="CHEMBL4630835"/>
<dbReference type="TCDB" id="9.A.14.22.2">
    <property type="family name" value="the g-protein-coupled receptor (gpcr) family"/>
</dbReference>
<dbReference type="GlyConnect" id="1660">
    <property type="glycosylation" value="2 N-Linked glycans (1 site)"/>
</dbReference>
<dbReference type="GlyCosmos" id="Q5VW38">
    <property type="glycosylation" value="3 sites, 1 glycan"/>
</dbReference>
<dbReference type="GlyGen" id="Q5VW38">
    <property type="glycosylation" value="6 sites, 16 N-linked glycans (2 sites), 1 O-linked glycan (3 sites)"/>
</dbReference>
<dbReference type="iPTMnet" id="Q5VW38"/>
<dbReference type="PhosphoSitePlus" id="Q5VW38"/>
<dbReference type="BioMuta" id="GPR107"/>
<dbReference type="DMDM" id="68565572"/>
<dbReference type="jPOST" id="Q5VW38"/>
<dbReference type="MassIVE" id="Q5VW38"/>
<dbReference type="PaxDb" id="9606-ENSP00000361483"/>
<dbReference type="PeptideAtlas" id="Q5VW38"/>
<dbReference type="ProteomicsDB" id="65517">
    <molecule id="Q5VW38-1"/>
</dbReference>
<dbReference type="ProteomicsDB" id="65518">
    <molecule id="Q5VW38-2"/>
</dbReference>
<dbReference type="ProteomicsDB" id="65519">
    <molecule id="Q5VW38-3"/>
</dbReference>
<dbReference type="Pumba" id="Q5VW38"/>
<dbReference type="Antibodypedia" id="31467">
    <property type="antibodies" value="142 antibodies from 27 providers"/>
</dbReference>
<dbReference type="DNASU" id="57720"/>
<dbReference type="Ensembl" id="ENST00000347136.11">
    <molecule id="Q5VW38-2"/>
    <property type="protein sequence ID" value="ENSP00000336988.7"/>
    <property type="gene ID" value="ENSG00000148358.21"/>
</dbReference>
<dbReference type="Ensembl" id="ENST00000372406.5">
    <molecule id="Q5VW38-1"/>
    <property type="protein sequence ID" value="ENSP00000361483.1"/>
    <property type="gene ID" value="ENSG00000148358.21"/>
</dbReference>
<dbReference type="GeneID" id="57720"/>
<dbReference type="KEGG" id="hsa:57720"/>
<dbReference type="MANE-Select" id="ENST00000347136.11">
    <molecule id="Q5VW38-2"/>
    <property type="protein sequence ID" value="ENSP00000336988.7"/>
    <property type="RefSeq nucleotide sequence ID" value="NM_020960.5"/>
    <property type="RefSeq protein sequence ID" value="NP_066011.2"/>
</dbReference>
<dbReference type="UCSC" id="uc004bzd.3">
    <molecule id="Q5VW38-1"/>
    <property type="organism name" value="human"/>
</dbReference>
<dbReference type="AGR" id="HGNC:17830"/>
<dbReference type="CTD" id="57720"/>
<dbReference type="DisGeNET" id="57720"/>
<dbReference type="GeneCards" id="GPR107"/>
<dbReference type="HGNC" id="HGNC:17830">
    <property type="gene designation" value="GPR107"/>
</dbReference>
<dbReference type="HPA" id="ENSG00000148358">
    <property type="expression patterns" value="Low tissue specificity"/>
</dbReference>
<dbReference type="MIM" id="618490">
    <property type="type" value="gene"/>
</dbReference>
<dbReference type="neXtProt" id="NX_Q5VW38"/>
<dbReference type="OpenTargets" id="ENSG00000148358"/>
<dbReference type="PharmGKB" id="PA28854"/>
<dbReference type="VEuPathDB" id="HostDB:ENSG00000148358"/>
<dbReference type="eggNOG" id="KOG2569">
    <property type="taxonomic scope" value="Eukaryota"/>
</dbReference>
<dbReference type="GeneTree" id="ENSGT00940000160451"/>
<dbReference type="HOGENOM" id="CLU_020277_4_1_1"/>
<dbReference type="InParanoid" id="Q5VW38"/>
<dbReference type="OMA" id="GIHEEAW"/>
<dbReference type="OrthoDB" id="29657at2759"/>
<dbReference type="PAN-GO" id="Q5VW38">
    <property type="GO annotations" value="5 GO annotations based on evolutionary models"/>
</dbReference>
<dbReference type="PhylomeDB" id="Q5VW38"/>
<dbReference type="TreeFam" id="TF314804"/>
<dbReference type="PathwayCommons" id="Q5VW38"/>
<dbReference type="SignaLink" id="Q5VW38"/>
<dbReference type="BioGRID-ORCS" id="57720">
    <property type="hits" value="16 hits in 1158 CRISPR screens"/>
</dbReference>
<dbReference type="ChiTaRS" id="GPR107">
    <property type="organism name" value="human"/>
</dbReference>
<dbReference type="GeneWiki" id="GPR107"/>
<dbReference type="GenomeRNAi" id="57720"/>
<dbReference type="Pharos" id="Q5VW38">
    <property type="development level" value="Tbio"/>
</dbReference>
<dbReference type="PRO" id="PR:Q5VW38"/>
<dbReference type="Proteomes" id="UP000005640">
    <property type="component" value="Chromosome 9"/>
</dbReference>
<dbReference type="RNAct" id="Q5VW38">
    <property type="molecule type" value="protein"/>
</dbReference>
<dbReference type="Bgee" id="ENSG00000148358">
    <property type="expression patterns" value="Expressed in endometrium epithelium and 211 other cell types or tissues"/>
</dbReference>
<dbReference type="ExpressionAtlas" id="Q5VW38">
    <property type="expression patterns" value="baseline and differential"/>
</dbReference>
<dbReference type="GO" id="GO:0030136">
    <property type="term" value="C:clathrin-coated vesicle"/>
    <property type="evidence" value="ECO:0000318"/>
    <property type="project" value="GO_Central"/>
</dbReference>
<dbReference type="GO" id="GO:0005769">
    <property type="term" value="C:early endosome"/>
    <property type="evidence" value="ECO:0007669"/>
    <property type="project" value="Ensembl"/>
</dbReference>
<dbReference type="GO" id="GO:0005794">
    <property type="term" value="C:Golgi apparatus"/>
    <property type="evidence" value="ECO:0000314"/>
    <property type="project" value="HPA"/>
</dbReference>
<dbReference type="GO" id="GO:0016020">
    <property type="term" value="C:membrane"/>
    <property type="evidence" value="ECO:0000318"/>
    <property type="project" value="GO_Central"/>
</dbReference>
<dbReference type="GO" id="GO:0005654">
    <property type="term" value="C:nucleoplasm"/>
    <property type="evidence" value="ECO:0000314"/>
    <property type="project" value="HPA"/>
</dbReference>
<dbReference type="GO" id="GO:0005886">
    <property type="term" value="C:plasma membrane"/>
    <property type="evidence" value="ECO:0007669"/>
    <property type="project" value="UniProtKB-SubCell"/>
</dbReference>
<dbReference type="GO" id="GO:0032050">
    <property type="term" value="F:clathrin heavy chain binding"/>
    <property type="evidence" value="ECO:0000318"/>
    <property type="project" value="GO_Central"/>
</dbReference>
<dbReference type="GO" id="GO:0072583">
    <property type="term" value="P:clathrin-dependent endocytosis"/>
    <property type="evidence" value="ECO:0000318"/>
    <property type="project" value="GO_Central"/>
</dbReference>
<dbReference type="InterPro" id="IPR053937">
    <property type="entry name" value="GOST_TM"/>
</dbReference>
<dbReference type="InterPro" id="IPR009637">
    <property type="entry name" value="GPR107/GPR108-like"/>
</dbReference>
<dbReference type="PANTHER" id="PTHR21229">
    <property type="entry name" value="LUNG SEVEN TRANSMEMBRANE RECEPTOR"/>
    <property type="match status" value="1"/>
</dbReference>
<dbReference type="PANTHER" id="PTHR21229:SF12">
    <property type="entry name" value="PROTEIN GPR107"/>
    <property type="match status" value="1"/>
</dbReference>
<dbReference type="Pfam" id="PF06814">
    <property type="entry name" value="GOST_TM"/>
    <property type="match status" value="2"/>
</dbReference>
<accession>Q5VW38</accession>
<accession>A6NJ53</accession>
<accession>Q2TB81</accession>
<accession>Q5JPA3</accession>
<accession>Q5VW39</accession>
<accession>Q96T26</accession>
<accession>Q9H658</accession>
<accession>Q9HCE8</accession>
<sequence length="600" mass="66990">MAALAPVGSPASRGPRLAAGLRLLPMLGLLQLLAEPGLGRVHHLALKDDVRHKVHLNTFGFFKDGYMVVNVSSLSLNEPEDKDVTIGFSLDRTKNDGFSSYLDEDVNYCILKKQSVSVTLLILDISRSEVRVKSPPEAGTQLPKIIFSRDEKVLGQSQEPNVNPASAGNQTQKTQDGGKSKRSTVDSKAMGEKSFSVHNNGGAVSFQFFFNISTDDQEGLYSLYFHKCLGKELPSDKFTFSLDIEITEKNPDSYLSAGEIPLPKLYISMAFFFFLSGTIWIHILRKRRNDVFKIHWLMAALPFTKSLSLVFHAIDYHYISSQGFPIEGWAVVYYITHLLKGALLFITIALIGTGWAFIKHILSDKDKKIFMIVIPLQVLANVAYIIIESTEEGTTEYGLWKDSLFLVDLLCCGAILFPVVWSIRHLQEASATDGKGDSMGPLQQRANLRAGSRIESHHFAQADLELLASSCPPASVSQRAGITAAINLAKLKLFRHYYVLIVCYIYFTRIIAFLLKLAVPFQWKWLYQLLDETATLVFFVLTGYKFRPASDNPYLQLSQEEEDLEMESVVTTSGVMESMKKVKKVTNGSVEPQGEWEGAV</sequence>